<evidence type="ECO:0000255" key="1">
    <source>
        <dbReference type="HAMAP-Rule" id="MF_00382"/>
    </source>
</evidence>
<evidence type="ECO:0000305" key="2"/>
<protein>
    <recommendedName>
        <fullName evidence="1">Large ribosomal subunit protein bL20</fullName>
    </recommendedName>
    <alternativeName>
        <fullName evidence="2">50S ribosomal protein L20</fullName>
    </alternativeName>
</protein>
<dbReference type="EMBL" id="CP000232">
    <property type="protein sequence ID" value="ABC20057.1"/>
    <property type="molecule type" value="Genomic_DNA"/>
</dbReference>
<dbReference type="RefSeq" id="YP_430600.1">
    <property type="nucleotide sequence ID" value="NC_007644.1"/>
</dbReference>
<dbReference type="SMR" id="Q2RHN2"/>
<dbReference type="STRING" id="264732.Moth_1756"/>
<dbReference type="EnsemblBacteria" id="ABC20057">
    <property type="protein sequence ID" value="ABC20057"/>
    <property type="gene ID" value="Moth_1756"/>
</dbReference>
<dbReference type="KEGG" id="mta:Moth_1756"/>
<dbReference type="PATRIC" id="fig|264732.11.peg.1906"/>
<dbReference type="eggNOG" id="COG0292">
    <property type="taxonomic scope" value="Bacteria"/>
</dbReference>
<dbReference type="HOGENOM" id="CLU_123265_0_1_9"/>
<dbReference type="OrthoDB" id="9808966at2"/>
<dbReference type="GO" id="GO:1990904">
    <property type="term" value="C:ribonucleoprotein complex"/>
    <property type="evidence" value="ECO:0007669"/>
    <property type="project" value="UniProtKB-KW"/>
</dbReference>
<dbReference type="GO" id="GO:0005840">
    <property type="term" value="C:ribosome"/>
    <property type="evidence" value="ECO:0007669"/>
    <property type="project" value="UniProtKB-KW"/>
</dbReference>
<dbReference type="GO" id="GO:0019843">
    <property type="term" value="F:rRNA binding"/>
    <property type="evidence" value="ECO:0007669"/>
    <property type="project" value="UniProtKB-UniRule"/>
</dbReference>
<dbReference type="GO" id="GO:0003735">
    <property type="term" value="F:structural constituent of ribosome"/>
    <property type="evidence" value="ECO:0007669"/>
    <property type="project" value="InterPro"/>
</dbReference>
<dbReference type="GO" id="GO:0000027">
    <property type="term" value="P:ribosomal large subunit assembly"/>
    <property type="evidence" value="ECO:0007669"/>
    <property type="project" value="UniProtKB-UniRule"/>
</dbReference>
<dbReference type="GO" id="GO:0006412">
    <property type="term" value="P:translation"/>
    <property type="evidence" value="ECO:0007669"/>
    <property type="project" value="InterPro"/>
</dbReference>
<dbReference type="CDD" id="cd07026">
    <property type="entry name" value="Ribosomal_L20"/>
    <property type="match status" value="1"/>
</dbReference>
<dbReference type="FunFam" id="1.10.1900.20:FF:000001">
    <property type="entry name" value="50S ribosomal protein L20"/>
    <property type="match status" value="1"/>
</dbReference>
<dbReference type="Gene3D" id="6.10.160.10">
    <property type="match status" value="1"/>
</dbReference>
<dbReference type="Gene3D" id="1.10.1900.20">
    <property type="entry name" value="Ribosomal protein L20"/>
    <property type="match status" value="1"/>
</dbReference>
<dbReference type="HAMAP" id="MF_00382">
    <property type="entry name" value="Ribosomal_bL20"/>
    <property type="match status" value="1"/>
</dbReference>
<dbReference type="InterPro" id="IPR005813">
    <property type="entry name" value="Ribosomal_bL20"/>
</dbReference>
<dbReference type="InterPro" id="IPR049946">
    <property type="entry name" value="RIBOSOMAL_L20_CS"/>
</dbReference>
<dbReference type="InterPro" id="IPR035566">
    <property type="entry name" value="Ribosomal_protein_bL20_C"/>
</dbReference>
<dbReference type="NCBIfam" id="TIGR01032">
    <property type="entry name" value="rplT_bact"/>
    <property type="match status" value="1"/>
</dbReference>
<dbReference type="PANTHER" id="PTHR10986">
    <property type="entry name" value="39S RIBOSOMAL PROTEIN L20"/>
    <property type="match status" value="1"/>
</dbReference>
<dbReference type="Pfam" id="PF00453">
    <property type="entry name" value="Ribosomal_L20"/>
    <property type="match status" value="1"/>
</dbReference>
<dbReference type="PRINTS" id="PR00062">
    <property type="entry name" value="RIBOSOMALL20"/>
</dbReference>
<dbReference type="SUPFAM" id="SSF74731">
    <property type="entry name" value="Ribosomal protein L20"/>
    <property type="match status" value="1"/>
</dbReference>
<dbReference type="PROSITE" id="PS00937">
    <property type="entry name" value="RIBOSOMAL_L20"/>
    <property type="match status" value="1"/>
</dbReference>
<sequence>MARVKRGVTKHQRHKKILKLAKGYFGAKSKLFRPANEQVIKSLAYAYAHRRQRKGDFRKLWIARINAAARMNGINYSRLVNGLKKAGVEINRKMLADMAVNDQAGFNRLVDIAKEKLGLGA</sequence>
<gene>
    <name evidence="1" type="primary">rplT</name>
    <name type="ordered locus">Moth_1756</name>
</gene>
<organism>
    <name type="scientific">Moorella thermoacetica (strain ATCC 39073 / JCM 9320)</name>
    <dbReference type="NCBI Taxonomy" id="264732"/>
    <lineage>
        <taxon>Bacteria</taxon>
        <taxon>Bacillati</taxon>
        <taxon>Bacillota</taxon>
        <taxon>Clostridia</taxon>
        <taxon>Moorellales</taxon>
        <taxon>Moorellaceae</taxon>
        <taxon>Moorella</taxon>
    </lineage>
</organism>
<name>RL20_MOOTA</name>
<comment type="function">
    <text evidence="1">Binds directly to 23S ribosomal RNA and is necessary for the in vitro assembly process of the 50S ribosomal subunit. It is not involved in the protein synthesizing functions of that subunit.</text>
</comment>
<comment type="similarity">
    <text evidence="1">Belongs to the bacterial ribosomal protein bL20 family.</text>
</comment>
<proteinExistence type="inferred from homology"/>
<accession>Q2RHN2</accession>
<reference key="1">
    <citation type="journal article" date="2008" name="Environ. Microbiol.">
        <title>The complete genome sequence of Moorella thermoacetica (f. Clostridium thermoaceticum).</title>
        <authorList>
            <person name="Pierce E."/>
            <person name="Xie G."/>
            <person name="Barabote R.D."/>
            <person name="Saunders E."/>
            <person name="Han C.S."/>
            <person name="Detter J.C."/>
            <person name="Richardson P."/>
            <person name="Brettin T.S."/>
            <person name="Das A."/>
            <person name="Ljungdahl L.G."/>
            <person name="Ragsdale S.W."/>
        </authorList>
    </citation>
    <scope>NUCLEOTIDE SEQUENCE [LARGE SCALE GENOMIC DNA]</scope>
    <source>
        <strain>ATCC 39073 / JCM 9320</strain>
    </source>
</reference>
<feature type="chain" id="PRO_0000243699" description="Large ribosomal subunit protein bL20">
    <location>
        <begin position="1"/>
        <end position="121"/>
    </location>
</feature>
<keyword id="KW-0687">Ribonucleoprotein</keyword>
<keyword id="KW-0689">Ribosomal protein</keyword>
<keyword id="KW-0694">RNA-binding</keyword>
<keyword id="KW-0699">rRNA-binding</keyword>